<protein>
    <recommendedName>
        <fullName evidence="1">Probable GTP-binding protein EngB</fullName>
    </recommendedName>
</protein>
<comment type="function">
    <text evidence="1">Necessary for normal cell division and for the maintenance of normal septation.</text>
</comment>
<comment type="cofactor">
    <cofactor evidence="1">
        <name>Mg(2+)</name>
        <dbReference type="ChEBI" id="CHEBI:18420"/>
    </cofactor>
</comment>
<comment type="similarity">
    <text evidence="1">Belongs to the TRAFAC class TrmE-Era-EngA-EngB-Septin-like GTPase superfamily. EngB GTPase family.</text>
</comment>
<proteinExistence type="inferred from homology"/>
<gene>
    <name evidence="1" type="primary">engB</name>
    <name type="ordered locus">RD1_1453</name>
</gene>
<sequence>MQLPFPVAQDPDQHSLEKGRLLFAGDTEFVKGVVAMSGLPDPDRLEVCFAGRSNVGKSSLINALTGRKGLARASNTPGRTQEINFFTAGESHYLVDLPGYGYANAPVPVVEKWQRLLKQYLSGRQTLRRAFVLIDARHGVKKVDEEILSLLDSAAVTFQVVLTKADKVKEKEREKVLDQVRTALSKHPAAFPELVITSSEKGWGIPTLRSIITDLT</sequence>
<feature type="chain" id="PRO_0000266938" description="Probable GTP-binding protein EngB">
    <location>
        <begin position="1"/>
        <end position="216"/>
    </location>
</feature>
<feature type="domain" description="EngB-type G" evidence="1">
    <location>
        <begin position="43"/>
        <end position="216"/>
    </location>
</feature>
<feature type="binding site" evidence="1">
    <location>
        <begin position="51"/>
        <end position="58"/>
    </location>
    <ligand>
        <name>GTP</name>
        <dbReference type="ChEBI" id="CHEBI:37565"/>
    </ligand>
</feature>
<feature type="binding site" evidence="1">
    <location>
        <position position="58"/>
    </location>
    <ligand>
        <name>Mg(2+)</name>
        <dbReference type="ChEBI" id="CHEBI:18420"/>
    </ligand>
</feature>
<feature type="binding site" evidence="1">
    <location>
        <begin position="78"/>
        <end position="82"/>
    </location>
    <ligand>
        <name>GTP</name>
        <dbReference type="ChEBI" id="CHEBI:37565"/>
    </ligand>
</feature>
<feature type="binding site" evidence="1">
    <location>
        <position position="80"/>
    </location>
    <ligand>
        <name>Mg(2+)</name>
        <dbReference type="ChEBI" id="CHEBI:18420"/>
    </ligand>
</feature>
<feature type="binding site" evidence="1">
    <location>
        <begin position="96"/>
        <end position="99"/>
    </location>
    <ligand>
        <name>GTP</name>
        <dbReference type="ChEBI" id="CHEBI:37565"/>
    </ligand>
</feature>
<feature type="binding site" evidence="1">
    <location>
        <begin position="163"/>
        <end position="166"/>
    </location>
    <ligand>
        <name>GTP</name>
        <dbReference type="ChEBI" id="CHEBI:37565"/>
    </ligand>
</feature>
<feature type="binding site" evidence="1">
    <location>
        <begin position="197"/>
        <end position="199"/>
    </location>
    <ligand>
        <name>GTP</name>
        <dbReference type="ChEBI" id="CHEBI:37565"/>
    </ligand>
</feature>
<keyword id="KW-0131">Cell cycle</keyword>
<keyword id="KW-0132">Cell division</keyword>
<keyword id="KW-0342">GTP-binding</keyword>
<keyword id="KW-0460">Magnesium</keyword>
<keyword id="KW-0479">Metal-binding</keyword>
<keyword id="KW-0547">Nucleotide-binding</keyword>
<keyword id="KW-1185">Reference proteome</keyword>
<keyword id="KW-0717">Septation</keyword>
<organism>
    <name type="scientific">Roseobacter denitrificans (strain ATCC 33942 / OCh 114)</name>
    <name type="common">Erythrobacter sp. (strain OCh 114)</name>
    <name type="synonym">Roseobacter denitrificans</name>
    <dbReference type="NCBI Taxonomy" id="375451"/>
    <lineage>
        <taxon>Bacteria</taxon>
        <taxon>Pseudomonadati</taxon>
        <taxon>Pseudomonadota</taxon>
        <taxon>Alphaproteobacteria</taxon>
        <taxon>Rhodobacterales</taxon>
        <taxon>Roseobacteraceae</taxon>
        <taxon>Roseobacter</taxon>
    </lineage>
</organism>
<reference key="1">
    <citation type="journal article" date="2007" name="J. Bacteriol.">
        <title>The complete genome sequence of Roseobacter denitrificans reveals a mixotrophic rather than photosynthetic metabolism.</title>
        <authorList>
            <person name="Swingley W.D."/>
            <person name="Sadekar S."/>
            <person name="Mastrian S.D."/>
            <person name="Matthies H.J."/>
            <person name="Hao J."/>
            <person name="Ramos H."/>
            <person name="Acharya C.R."/>
            <person name="Conrad A.L."/>
            <person name="Taylor H.L."/>
            <person name="Dejesa L.C."/>
            <person name="Shah M.K."/>
            <person name="O'Huallachain M.E."/>
            <person name="Lince M.T."/>
            <person name="Blankenship R.E."/>
            <person name="Beatty J.T."/>
            <person name="Touchman J.W."/>
        </authorList>
    </citation>
    <scope>NUCLEOTIDE SEQUENCE [LARGE SCALE GENOMIC DNA]</scope>
    <source>
        <strain>ATCC 33942 / OCh 114</strain>
    </source>
</reference>
<name>ENGB_ROSDO</name>
<accession>Q16AA3</accession>
<dbReference type="EMBL" id="CP000362">
    <property type="protein sequence ID" value="ABG31090.1"/>
    <property type="molecule type" value="Genomic_DNA"/>
</dbReference>
<dbReference type="RefSeq" id="WP_011567710.1">
    <property type="nucleotide sequence ID" value="NC_008209.1"/>
</dbReference>
<dbReference type="SMR" id="Q16AA3"/>
<dbReference type="STRING" id="375451.RD1_1453"/>
<dbReference type="KEGG" id="rde:RD1_1453"/>
<dbReference type="eggNOG" id="COG0218">
    <property type="taxonomic scope" value="Bacteria"/>
</dbReference>
<dbReference type="HOGENOM" id="CLU_033732_2_0_5"/>
<dbReference type="OrthoDB" id="9804921at2"/>
<dbReference type="Proteomes" id="UP000007029">
    <property type="component" value="Chromosome"/>
</dbReference>
<dbReference type="GO" id="GO:0005829">
    <property type="term" value="C:cytosol"/>
    <property type="evidence" value="ECO:0007669"/>
    <property type="project" value="TreeGrafter"/>
</dbReference>
<dbReference type="GO" id="GO:0005525">
    <property type="term" value="F:GTP binding"/>
    <property type="evidence" value="ECO:0007669"/>
    <property type="project" value="UniProtKB-UniRule"/>
</dbReference>
<dbReference type="GO" id="GO:0046872">
    <property type="term" value="F:metal ion binding"/>
    <property type="evidence" value="ECO:0007669"/>
    <property type="project" value="UniProtKB-KW"/>
</dbReference>
<dbReference type="GO" id="GO:0000917">
    <property type="term" value="P:division septum assembly"/>
    <property type="evidence" value="ECO:0007669"/>
    <property type="project" value="UniProtKB-KW"/>
</dbReference>
<dbReference type="CDD" id="cd01876">
    <property type="entry name" value="YihA_EngB"/>
    <property type="match status" value="1"/>
</dbReference>
<dbReference type="FunFam" id="3.40.50.300:FF:000098">
    <property type="entry name" value="Probable GTP-binding protein EngB"/>
    <property type="match status" value="1"/>
</dbReference>
<dbReference type="Gene3D" id="3.40.50.300">
    <property type="entry name" value="P-loop containing nucleotide triphosphate hydrolases"/>
    <property type="match status" value="1"/>
</dbReference>
<dbReference type="HAMAP" id="MF_00321">
    <property type="entry name" value="GTPase_EngB"/>
    <property type="match status" value="1"/>
</dbReference>
<dbReference type="InterPro" id="IPR030393">
    <property type="entry name" value="G_ENGB_dom"/>
</dbReference>
<dbReference type="InterPro" id="IPR006073">
    <property type="entry name" value="GTP-bd"/>
</dbReference>
<dbReference type="InterPro" id="IPR019987">
    <property type="entry name" value="GTP-bd_ribosome_bio_YsxC"/>
</dbReference>
<dbReference type="InterPro" id="IPR027417">
    <property type="entry name" value="P-loop_NTPase"/>
</dbReference>
<dbReference type="NCBIfam" id="TIGR03598">
    <property type="entry name" value="GTPase_YsxC"/>
    <property type="match status" value="1"/>
</dbReference>
<dbReference type="PANTHER" id="PTHR11649:SF13">
    <property type="entry name" value="ENGB-TYPE G DOMAIN-CONTAINING PROTEIN"/>
    <property type="match status" value="1"/>
</dbReference>
<dbReference type="PANTHER" id="PTHR11649">
    <property type="entry name" value="MSS1/TRME-RELATED GTP-BINDING PROTEIN"/>
    <property type="match status" value="1"/>
</dbReference>
<dbReference type="Pfam" id="PF01926">
    <property type="entry name" value="MMR_HSR1"/>
    <property type="match status" value="1"/>
</dbReference>
<dbReference type="SUPFAM" id="SSF52540">
    <property type="entry name" value="P-loop containing nucleoside triphosphate hydrolases"/>
    <property type="match status" value="1"/>
</dbReference>
<dbReference type="PROSITE" id="PS51706">
    <property type="entry name" value="G_ENGB"/>
    <property type="match status" value="1"/>
</dbReference>
<evidence type="ECO:0000255" key="1">
    <source>
        <dbReference type="HAMAP-Rule" id="MF_00321"/>
    </source>
</evidence>